<keyword id="KW-0158">Chromosome</keyword>
<keyword id="KW-0963">Cytoplasm</keyword>
<keyword id="KW-0238">DNA-binding</keyword>
<keyword id="KW-1185">Reference proteome</keyword>
<organism>
    <name type="scientific">Thermococcus kodakarensis (strain ATCC BAA-918 / JCM 12380 / KOD1)</name>
    <name type="common">Pyrococcus kodakaraensis (strain KOD1)</name>
    <dbReference type="NCBI Taxonomy" id="69014"/>
    <lineage>
        <taxon>Archaea</taxon>
        <taxon>Methanobacteriati</taxon>
        <taxon>Methanobacteriota</taxon>
        <taxon>Thermococci</taxon>
        <taxon>Thermococcales</taxon>
        <taxon>Thermococcaceae</taxon>
        <taxon>Thermococcus</taxon>
    </lineage>
</organism>
<feature type="chain" id="PRO_0000155002" description="Archaeal histone HTkB">
    <location>
        <begin position="1"/>
        <end position="67"/>
    </location>
</feature>
<feature type="region of interest" description="Interaction with DNA" evidence="1">
    <location>
        <begin position="20"/>
        <end position="22"/>
    </location>
</feature>
<feature type="region of interest" description="Interaction with DNA" evidence="1">
    <location>
        <begin position="54"/>
        <end position="57"/>
    </location>
</feature>
<accession>Q9Y8I2</accession>
<comment type="function">
    <text evidence="3 5 6">Binds and compacts DNA (about 120 base pairs per nucleosome, corresponding to four histone dimers) to form nucleosome-like structures (PubMed:30592095). Histones block elongating RNA polymerase (RNAP) (PubMed:30592095). HTkB/HpkB has higher DNA affinity than HTkA/HpkA and compacts DNA better than HTkA/HpkA (PubMed:10329402). Participates in both transcription activation and repression in vivo (PubMed:23065975).</text>
</comment>
<comment type="subunit">
    <text evidence="2">Homodimer or heterodimer. Dimers then assemble into higher oligomers, with the DNA wrapped around the protein core. Higher order oligomerization of these structures can give rise to long, superhelical fibers (in vitro).</text>
</comment>
<comment type="subcellular location">
    <subcellularLocation>
        <location evidence="11">Cytoplasm</location>
    </subcellularLocation>
    <subcellularLocation>
        <location evidence="4">Chromosome</location>
    </subcellularLocation>
</comment>
<comment type="induction">
    <text evidence="3">After 17 hours growth at 85 degrees Celsius HTkB/HpkB is expressed about twice as abundantly as HTkA/HpkA (at protein level) (PubMed:10329402).</text>
</comment>
<comment type="disruption phenotype">
    <text evidence="5">Cells can be transformed but grow about 75% as well as wild-type in liquid culture, some differences in transcription occur; double histone deletions (htkA and htkB) cannot be made (PubMed:23065975).</text>
</comment>
<comment type="miscellaneous">
    <text evidence="4 6">In a chromatin histone fraction 83% of the protein is this histone (PubMed:21148291). Cells have about 2.5 x 10(6) histone proteins per cell, enough to coat all DNA with a ratio of &gt;1 histone dimer for 30 bp of DNA, cells are polyploid with 7-19 genomes per cell (PubMed:30592095).</text>
</comment>
<comment type="similarity">
    <text evidence="10">Belongs to the archaeal histone HMF family.</text>
</comment>
<gene>
    <name evidence="9" type="primary">htkB</name>
    <name evidence="7" type="synonym">hpkB</name>
    <name type="ordered locus">TK2289</name>
</gene>
<sequence length="67" mass="7167">MAELPIAPVDRLIRKAGAARVSEEAAKVLAEHLEEKALEIAKKAVALAQHAGRKTVKAEDIKLAIKS</sequence>
<dbReference type="EMBL" id="AB016004">
    <property type="protein sequence ID" value="BAA77576.1"/>
    <property type="molecule type" value="Genomic_DNA"/>
</dbReference>
<dbReference type="EMBL" id="AP006878">
    <property type="protein sequence ID" value="BAD86478.1"/>
    <property type="molecule type" value="Genomic_DNA"/>
</dbReference>
<dbReference type="RefSeq" id="WP_011251239.1">
    <property type="nucleotide sequence ID" value="NC_006624.1"/>
</dbReference>
<dbReference type="SMR" id="Q9Y8I2"/>
<dbReference type="FunCoup" id="Q9Y8I2">
    <property type="interactions" value="1"/>
</dbReference>
<dbReference type="STRING" id="69014.TK2289"/>
<dbReference type="EnsemblBacteria" id="BAD86478">
    <property type="protein sequence ID" value="BAD86478"/>
    <property type="gene ID" value="TK2289"/>
</dbReference>
<dbReference type="GeneID" id="34863161"/>
<dbReference type="GeneID" id="82171107"/>
<dbReference type="KEGG" id="tko:TK2289"/>
<dbReference type="PATRIC" id="fig|69014.16.peg.2244"/>
<dbReference type="eggNOG" id="arCOG02144">
    <property type="taxonomic scope" value="Archaea"/>
</dbReference>
<dbReference type="HOGENOM" id="CLU_192667_0_0_2"/>
<dbReference type="InParanoid" id="Q9Y8I2"/>
<dbReference type="OrthoDB" id="7514at2157"/>
<dbReference type="PhylomeDB" id="Q9Y8I2"/>
<dbReference type="Proteomes" id="UP000000536">
    <property type="component" value="Chromosome"/>
</dbReference>
<dbReference type="GO" id="GO:0005694">
    <property type="term" value="C:chromosome"/>
    <property type="evidence" value="ECO:0007669"/>
    <property type="project" value="UniProtKB-SubCell"/>
</dbReference>
<dbReference type="GO" id="GO:0005737">
    <property type="term" value="C:cytoplasm"/>
    <property type="evidence" value="ECO:0007669"/>
    <property type="project" value="UniProtKB-SubCell"/>
</dbReference>
<dbReference type="GO" id="GO:0003677">
    <property type="term" value="F:DNA binding"/>
    <property type="evidence" value="ECO:0007669"/>
    <property type="project" value="UniProtKB-KW"/>
</dbReference>
<dbReference type="GO" id="GO:0046982">
    <property type="term" value="F:protein heterodimerization activity"/>
    <property type="evidence" value="ECO:0007669"/>
    <property type="project" value="InterPro"/>
</dbReference>
<dbReference type="CDD" id="cd22909">
    <property type="entry name" value="HFD_archaea_histone-like"/>
    <property type="match status" value="1"/>
</dbReference>
<dbReference type="Gene3D" id="1.10.20.10">
    <property type="entry name" value="Histone, subunit A"/>
    <property type="match status" value="1"/>
</dbReference>
<dbReference type="InterPro" id="IPR050947">
    <property type="entry name" value="Archaeal_histone_HMF"/>
</dbReference>
<dbReference type="InterPro" id="IPR003958">
    <property type="entry name" value="CBFA_NFYB_domain"/>
</dbReference>
<dbReference type="InterPro" id="IPR009072">
    <property type="entry name" value="Histone-fold"/>
</dbReference>
<dbReference type="InterPro" id="IPR050004">
    <property type="entry name" value="HmfB-like"/>
</dbReference>
<dbReference type="InterPro" id="IPR004823">
    <property type="entry name" value="TAF_TATA-bd_Histone-like_dom"/>
</dbReference>
<dbReference type="NCBIfam" id="NF043032">
    <property type="entry name" value="archaea_histone"/>
    <property type="match status" value="1"/>
</dbReference>
<dbReference type="PANTHER" id="PTHR47828">
    <property type="entry name" value="ARCHAEAL HISTONE A"/>
    <property type="match status" value="1"/>
</dbReference>
<dbReference type="PANTHER" id="PTHR47828:SF1">
    <property type="entry name" value="ARCHAEAL HISTONE A"/>
    <property type="match status" value="1"/>
</dbReference>
<dbReference type="Pfam" id="PF00808">
    <property type="entry name" value="CBFD_NFYB_HMF"/>
    <property type="match status" value="1"/>
</dbReference>
<dbReference type="SMART" id="SM00803">
    <property type="entry name" value="TAF"/>
    <property type="match status" value="1"/>
</dbReference>
<dbReference type="SUPFAM" id="SSF47113">
    <property type="entry name" value="Histone-fold"/>
    <property type="match status" value="1"/>
</dbReference>
<protein>
    <recommendedName>
        <fullName evidence="9">Archaeal histone HTkB</fullName>
    </recommendedName>
    <alternativeName>
        <fullName>Archaeal histone A2</fullName>
    </alternativeName>
    <alternativeName>
        <fullName evidence="8">Archaeal histone B</fullName>
    </alternativeName>
    <alternativeName>
        <fullName evidence="7">HpkB</fullName>
    </alternativeName>
</protein>
<proteinExistence type="evidence at protein level"/>
<name>HARB_THEKO</name>
<reference key="1">
    <citation type="journal article" date="1999" name="Biochem. Biophys. Res. Commun.">
        <title>Analysis of DNA compaction profile and intracellular contents of archaeal histones from Pyrococcus kodakaraensis KOD1.</title>
        <authorList>
            <person name="Higashibata H."/>
            <person name="Fujiwara S."/>
            <person name="Takagi M."/>
            <person name="Imanaka T."/>
        </authorList>
    </citation>
    <scope>NUCLEOTIDE SEQUENCE [GENOMIC DNA]</scope>
    <scope>FUNCTION</scope>
    <scope>INDUCTION</scope>
    <scope>DNA-BINDING</scope>
    <source>
        <strain>ATCC BAA-918 / JCM 12380 / KOD1</strain>
    </source>
</reference>
<reference key="2">
    <citation type="journal article" date="2005" name="Genome Res.">
        <title>Complete genome sequence of the hyperthermophilic archaeon Thermococcus kodakaraensis KOD1 and comparison with Pyrococcus genomes.</title>
        <authorList>
            <person name="Fukui T."/>
            <person name="Atomi H."/>
            <person name="Kanai T."/>
            <person name="Matsumi R."/>
            <person name="Fujiwara S."/>
            <person name="Imanaka T."/>
        </authorList>
    </citation>
    <scope>NUCLEOTIDE SEQUENCE [LARGE SCALE GENOMIC DNA]</scope>
    <source>
        <strain>ATCC BAA-918 / JCM 12380 / KOD1</strain>
    </source>
</reference>
<reference key="3">
    <citation type="journal article" date="2011" name="Mol. Biol. Cell">
        <title>Histone and TK0471/TrmBL2 form a novel heterogeneous genome architecture in the hyperthermophilic archaeon Thermococcus kodakarensis.</title>
        <authorList>
            <person name="Maruyama H."/>
            <person name="Shin M."/>
            <person name="Oda T."/>
            <person name="Matsumi R."/>
            <person name="Ohniwa R.L."/>
            <person name="Itoh T."/>
            <person name="Shirahige K."/>
            <person name="Imanaka T."/>
            <person name="Atomi H."/>
            <person name="Yoshimura S.H."/>
            <person name="Takeyasu K."/>
        </authorList>
    </citation>
    <scope>IDENTIFICATION BY MASS SPECTROMETRY</scope>
    <scope>SUBCELLULAR LOCATION</scope>
    <scope>PROTEIN ABUNDANCE</scope>
    <source>
        <strain>ATCC BAA-918 / JCM 12380 / KOD1</strain>
    </source>
</reference>
<reference key="4">
    <citation type="journal article" date="2012" name="J. Bacteriol.">
        <title>An archaeal histone is required for transformation of Thermococcus kodakarensis.</title>
        <authorList>
            <person name="Cubonovaa L."/>
            <person name="Katano M."/>
            <person name="Kanai T."/>
            <person name="Atomi H."/>
            <person name="Reeve J.N."/>
            <person name="Santangelo T.J."/>
        </authorList>
    </citation>
    <scope>FUNCTION</scope>
    <scope>DISRUPTION PHENOTYPE</scope>
    <source>
        <strain>ATCC BAA-918 / JCM 12380 / KOD1</strain>
    </source>
</reference>
<reference key="5">
    <citation type="journal article" date="2019" name="Mol. Microbiol.">
        <title>TFS and Spt4/5 accelerate transcription through archaeal histone-based chromatin.</title>
        <authorList>
            <person name="Sanders T.J."/>
            <person name="Lammers M."/>
            <person name="Marshall C.J."/>
            <person name="Walker J.E."/>
            <person name="Lynch E.R."/>
            <person name="Santangelo T.J."/>
        </authorList>
    </citation>
    <scope>FUNCTION</scope>
    <scope>PROTEIN ABUNDANCE</scope>
    <scope>DNA-BINDING</scope>
</reference>
<evidence type="ECO:0000250" key="1">
    <source>
        <dbReference type="UniProtKB" id="P19267"/>
    </source>
</evidence>
<evidence type="ECO:0000250" key="2">
    <source>
        <dbReference type="UniProtKB" id="Q9Y8I1"/>
    </source>
</evidence>
<evidence type="ECO:0000269" key="3">
    <source>
    </source>
</evidence>
<evidence type="ECO:0000269" key="4">
    <source>
    </source>
</evidence>
<evidence type="ECO:0000269" key="5">
    <source>
    </source>
</evidence>
<evidence type="ECO:0000269" key="6">
    <source>
    </source>
</evidence>
<evidence type="ECO:0000303" key="7">
    <source>
    </source>
</evidence>
<evidence type="ECO:0000303" key="8">
    <source>
    </source>
</evidence>
<evidence type="ECO:0000303" key="9">
    <source>
    </source>
</evidence>
<evidence type="ECO:0000305" key="10"/>
<evidence type="ECO:0000305" key="11">
    <source>
    </source>
</evidence>